<name>NTRK3_HUMAN</name>
<reference key="1">
    <citation type="journal article" date="1994" name="Genomics">
        <title>Molecular cloning of the cDNA for human TrkC (NTRK3), chromosomal assignment, and evidence for a splice variant.</title>
        <authorList>
            <person name="McGregor L.M."/>
            <person name="Baylin S.B."/>
            <person name="Griffin C.A."/>
            <person name="Hawkins A.L."/>
            <person name="Nelkin B.D."/>
        </authorList>
    </citation>
    <scope>NUCLEOTIDE SEQUENCE [MRNA] (ISOFORMS 1 AND 3)</scope>
    <source>
        <tissue>Fetal brain</tissue>
    </source>
</reference>
<reference key="2">
    <citation type="journal article" date="1995" name="J. Neurosci.">
        <title>Human trks: molecular cloning, tissue distribution, and expression of extracellular domain immunoadhesins.</title>
        <authorList>
            <person name="Shelton D.L."/>
            <person name="Sutherland J."/>
            <person name="Gripp J."/>
            <person name="Camerato T."/>
            <person name="Armanini M.P."/>
            <person name="Phillips H.S."/>
            <person name="Carroll K."/>
            <person name="Spencer S.D."/>
            <person name="Levinson A.D."/>
        </authorList>
    </citation>
    <scope>NUCLEOTIDE SEQUENCE [MRNA] (ISOFORMS 1; 2 AND 3)</scope>
    <scope>PARTIAL PROTEIN SEQUENCE</scope>
    <source>
        <tissue>Brain</tissue>
    </source>
</reference>
<reference key="3">
    <citation type="journal article" date="1998" name="Oncogene">
        <title>Genomic characterization of the human trkC gene.</title>
        <authorList>
            <person name="Ichaso N."/>
            <person name="Rodriguez R.E."/>
            <person name="Martin-Zanca D."/>
            <person name="Gonzalez-Sarmiento R."/>
        </authorList>
    </citation>
    <scope>NUCLEOTIDE SEQUENCE [GENOMIC DNA]</scope>
</reference>
<reference key="4">
    <citation type="journal article" date="2004" name="Nat. Genet.">
        <title>Complete sequencing and characterization of 21,243 full-length human cDNAs.</title>
        <authorList>
            <person name="Ota T."/>
            <person name="Suzuki Y."/>
            <person name="Nishikawa T."/>
            <person name="Otsuki T."/>
            <person name="Sugiyama T."/>
            <person name="Irie R."/>
            <person name="Wakamatsu A."/>
            <person name="Hayashi K."/>
            <person name="Sato H."/>
            <person name="Nagai K."/>
            <person name="Kimura K."/>
            <person name="Makita H."/>
            <person name="Sekine M."/>
            <person name="Obayashi M."/>
            <person name="Nishi T."/>
            <person name="Shibahara T."/>
            <person name="Tanaka T."/>
            <person name="Ishii S."/>
            <person name="Yamamoto J."/>
            <person name="Saito K."/>
            <person name="Kawai Y."/>
            <person name="Isono Y."/>
            <person name="Nakamura Y."/>
            <person name="Nagahari K."/>
            <person name="Murakami K."/>
            <person name="Yasuda T."/>
            <person name="Iwayanagi T."/>
            <person name="Wagatsuma M."/>
            <person name="Shiratori A."/>
            <person name="Sudo H."/>
            <person name="Hosoiri T."/>
            <person name="Kaku Y."/>
            <person name="Kodaira H."/>
            <person name="Kondo H."/>
            <person name="Sugawara M."/>
            <person name="Takahashi M."/>
            <person name="Kanda K."/>
            <person name="Yokoi T."/>
            <person name="Furuya T."/>
            <person name="Kikkawa E."/>
            <person name="Omura Y."/>
            <person name="Abe K."/>
            <person name="Kamihara K."/>
            <person name="Katsuta N."/>
            <person name="Sato K."/>
            <person name="Tanikawa M."/>
            <person name="Yamazaki M."/>
            <person name="Ninomiya K."/>
            <person name="Ishibashi T."/>
            <person name="Yamashita H."/>
            <person name="Murakawa K."/>
            <person name="Fujimori K."/>
            <person name="Tanai H."/>
            <person name="Kimata M."/>
            <person name="Watanabe M."/>
            <person name="Hiraoka S."/>
            <person name="Chiba Y."/>
            <person name="Ishida S."/>
            <person name="Ono Y."/>
            <person name="Takiguchi S."/>
            <person name="Watanabe S."/>
            <person name="Yosida M."/>
            <person name="Hotuta T."/>
            <person name="Kusano J."/>
            <person name="Kanehori K."/>
            <person name="Takahashi-Fujii A."/>
            <person name="Hara H."/>
            <person name="Tanase T.-O."/>
            <person name="Nomura Y."/>
            <person name="Togiya S."/>
            <person name="Komai F."/>
            <person name="Hara R."/>
            <person name="Takeuchi K."/>
            <person name="Arita M."/>
            <person name="Imose N."/>
            <person name="Musashino K."/>
            <person name="Yuuki H."/>
            <person name="Oshima A."/>
            <person name="Sasaki N."/>
            <person name="Aotsuka S."/>
            <person name="Yoshikawa Y."/>
            <person name="Matsunawa H."/>
            <person name="Ichihara T."/>
            <person name="Shiohata N."/>
            <person name="Sano S."/>
            <person name="Moriya S."/>
            <person name="Momiyama H."/>
            <person name="Satoh N."/>
            <person name="Takami S."/>
            <person name="Terashima Y."/>
            <person name="Suzuki O."/>
            <person name="Nakagawa S."/>
            <person name="Senoh A."/>
            <person name="Mizoguchi H."/>
            <person name="Goto Y."/>
            <person name="Shimizu F."/>
            <person name="Wakebe H."/>
            <person name="Hishigaki H."/>
            <person name="Watanabe T."/>
            <person name="Sugiyama A."/>
            <person name="Takemoto M."/>
            <person name="Kawakami B."/>
            <person name="Yamazaki M."/>
            <person name="Watanabe K."/>
            <person name="Kumagai A."/>
            <person name="Itakura S."/>
            <person name="Fukuzumi Y."/>
            <person name="Fujimori Y."/>
            <person name="Komiyama M."/>
            <person name="Tashiro H."/>
            <person name="Tanigami A."/>
            <person name="Fujiwara T."/>
            <person name="Ono T."/>
            <person name="Yamada K."/>
            <person name="Fujii Y."/>
            <person name="Ozaki K."/>
            <person name="Hirao M."/>
            <person name="Ohmori Y."/>
            <person name="Kawabata A."/>
            <person name="Hikiji T."/>
            <person name="Kobatake N."/>
            <person name="Inagaki H."/>
            <person name="Ikema Y."/>
            <person name="Okamoto S."/>
            <person name="Okitani R."/>
            <person name="Kawakami T."/>
            <person name="Noguchi S."/>
            <person name="Itoh T."/>
            <person name="Shigeta K."/>
            <person name="Senba T."/>
            <person name="Matsumura K."/>
            <person name="Nakajima Y."/>
            <person name="Mizuno T."/>
            <person name="Morinaga M."/>
            <person name="Sasaki M."/>
            <person name="Togashi T."/>
            <person name="Oyama M."/>
            <person name="Hata H."/>
            <person name="Watanabe M."/>
            <person name="Komatsu T."/>
            <person name="Mizushima-Sugano J."/>
            <person name="Satoh T."/>
            <person name="Shirai Y."/>
            <person name="Takahashi Y."/>
            <person name="Nakagawa K."/>
            <person name="Okumura K."/>
            <person name="Nagase T."/>
            <person name="Nomura N."/>
            <person name="Kikuchi H."/>
            <person name="Masuho Y."/>
            <person name="Yamashita R."/>
            <person name="Nakai K."/>
            <person name="Yada T."/>
            <person name="Nakamura Y."/>
            <person name="Ohara O."/>
            <person name="Isogai T."/>
            <person name="Sugano S."/>
        </authorList>
    </citation>
    <scope>NUCLEOTIDE SEQUENCE [LARGE SCALE MRNA] (ISOFORM 5)</scope>
    <source>
        <tissue>Brain</tissue>
    </source>
</reference>
<reference key="5">
    <citation type="journal article" date="2006" name="Nature">
        <title>Analysis of the DNA sequence and duplication history of human chromosome 15.</title>
        <authorList>
            <person name="Zody M.C."/>
            <person name="Garber M."/>
            <person name="Sharpe T."/>
            <person name="Young S.K."/>
            <person name="Rowen L."/>
            <person name="O'Neill K."/>
            <person name="Whittaker C.A."/>
            <person name="Kamal M."/>
            <person name="Chang J.L."/>
            <person name="Cuomo C.A."/>
            <person name="Dewar K."/>
            <person name="FitzGerald M.G."/>
            <person name="Kodira C.D."/>
            <person name="Madan A."/>
            <person name="Qin S."/>
            <person name="Yang X."/>
            <person name="Abbasi N."/>
            <person name="Abouelleil A."/>
            <person name="Arachchi H.M."/>
            <person name="Baradarani L."/>
            <person name="Birditt B."/>
            <person name="Bloom S."/>
            <person name="Bloom T."/>
            <person name="Borowsky M.L."/>
            <person name="Burke J."/>
            <person name="Butler J."/>
            <person name="Cook A."/>
            <person name="DeArellano K."/>
            <person name="DeCaprio D."/>
            <person name="Dorris L. III"/>
            <person name="Dors M."/>
            <person name="Eichler E.E."/>
            <person name="Engels R."/>
            <person name="Fahey J."/>
            <person name="Fleetwood P."/>
            <person name="Friedman C."/>
            <person name="Gearin G."/>
            <person name="Hall J.L."/>
            <person name="Hensley G."/>
            <person name="Johnson E."/>
            <person name="Jones C."/>
            <person name="Kamat A."/>
            <person name="Kaur A."/>
            <person name="Locke D.P."/>
            <person name="Madan A."/>
            <person name="Munson G."/>
            <person name="Jaffe D.B."/>
            <person name="Lui A."/>
            <person name="Macdonald P."/>
            <person name="Mauceli E."/>
            <person name="Naylor J.W."/>
            <person name="Nesbitt R."/>
            <person name="Nicol R."/>
            <person name="O'Leary S.B."/>
            <person name="Ratcliffe A."/>
            <person name="Rounsley S."/>
            <person name="She X."/>
            <person name="Sneddon K.M.B."/>
            <person name="Stewart S."/>
            <person name="Sougnez C."/>
            <person name="Stone S.M."/>
            <person name="Topham K."/>
            <person name="Vincent D."/>
            <person name="Wang S."/>
            <person name="Zimmer A.R."/>
            <person name="Birren B.W."/>
            <person name="Hood L."/>
            <person name="Lander E.S."/>
            <person name="Nusbaum C."/>
        </authorList>
    </citation>
    <scope>NUCLEOTIDE SEQUENCE [LARGE SCALE GENOMIC DNA]</scope>
</reference>
<reference key="6">
    <citation type="journal article" date="2014" name="Hum. Mutat.">
        <title>Mutations in NTRK3 suggest a novel signaling pathway in human congenital heart disease.</title>
        <authorList>
            <person name="Werner P."/>
            <person name="Paluru P."/>
            <person name="Simpson A.M."/>
            <person name="Latney B."/>
            <person name="Iyer R."/>
            <person name="Brodeur G.M."/>
            <person name="Goldmuntz E."/>
        </authorList>
    </citation>
    <scope>FUNCTION</scope>
    <scope>PHOSPHORYLATION AT TYR-516</scope>
    <scope>INVOLVEMENT IN CHD</scope>
    <scope>VARIANTS PHE-21; VAL-71; MET-93; ILE-163; PHE-533 AND MET-817</scope>
    <scope>CHARACTERIZATION OF VARIANTS MET-93; ILE-163; PHE-533 AND MET-817</scope>
    <scope>MUTAGENESIS OF LYS-572</scope>
</reference>
<reference key="7">
    <citation type="journal article" date="2014" name="Nat. Commun.">
        <title>Structural basis for extracellular cis and trans RPTPsigma signal competition in synaptogenesis.</title>
        <authorList>
            <person name="Coles C.H."/>
            <person name="Mitakidis N."/>
            <person name="Zhang P."/>
            <person name="Elegheert J."/>
            <person name="Lu W."/>
            <person name="Stoker A.W."/>
            <person name="Nakagawa T."/>
            <person name="Craig A.M."/>
            <person name="Jones E.Y."/>
            <person name="Aricescu A.R."/>
        </authorList>
    </citation>
    <scope>INTERACTION WITH PTPRS</scope>
</reference>
<reference key="8">
    <citation type="journal article" date="1999" name="J. Mol. Biol.">
        <title>Crystal structures of the neurotrophin-binding domain of TrkA, TrkB and TrkC.</title>
        <authorList>
            <person name="Ultsch M.H."/>
            <person name="Wiesmann C."/>
            <person name="Simmons L.C."/>
            <person name="Henrich J."/>
            <person name="Yang M."/>
            <person name="Reilly D."/>
            <person name="Bass S.H."/>
            <person name="de Vos A.M."/>
        </authorList>
    </citation>
    <scope>X-RAY CRYSTALLOGRAPHY (1.9 ANGSTROMS) OF 297-401</scope>
    <scope>DISULFIDE BOND</scope>
</reference>
<reference key="9">
    <citation type="journal article" date="2007" name="Nature">
        <title>Patterns of somatic mutation in human cancer genomes.</title>
        <authorList>
            <person name="Greenman C."/>
            <person name="Stephens P."/>
            <person name="Smith R."/>
            <person name="Dalgliesh G.L."/>
            <person name="Hunter C."/>
            <person name="Bignell G."/>
            <person name="Davies H."/>
            <person name="Teague J."/>
            <person name="Butler A."/>
            <person name="Stevens C."/>
            <person name="Edkins S."/>
            <person name="O'Meara S."/>
            <person name="Vastrik I."/>
            <person name="Schmidt E.E."/>
            <person name="Avis T."/>
            <person name="Barthorpe S."/>
            <person name="Bhamra G."/>
            <person name="Buck G."/>
            <person name="Choudhury B."/>
            <person name="Clements J."/>
            <person name="Cole J."/>
            <person name="Dicks E."/>
            <person name="Forbes S."/>
            <person name="Gray K."/>
            <person name="Halliday K."/>
            <person name="Harrison R."/>
            <person name="Hills K."/>
            <person name="Hinton J."/>
            <person name="Jenkinson A."/>
            <person name="Jones D."/>
            <person name="Menzies A."/>
            <person name="Mironenko T."/>
            <person name="Perry J."/>
            <person name="Raine K."/>
            <person name="Richardson D."/>
            <person name="Shepherd R."/>
            <person name="Small A."/>
            <person name="Tofts C."/>
            <person name="Varian J."/>
            <person name="Webb T."/>
            <person name="West S."/>
            <person name="Widaa S."/>
            <person name="Yates A."/>
            <person name="Cahill D.P."/>
            <person name="Louis D.N."/>
            <person name="Goldstraw P."/>
            <person name="Nicholson A.G."/>
            <person name="Brasseur F."/>
            <person name="Looijenga L."/>
            <person name="Weber B.L."/>
            <person name="Chiew Y.-E."/>
            <person name="DeFazio A."/>
            <person name="Greaves M.F."/>
            <person name="Green A.R."/>
            <person name="Campbell P."/>
            <person name="Birney E."/>
            <person name="Easton D.F."/>
            <person name="Chenevix-Trench G."/>
            <person name="Tan M.-H."/>
            <person name="Khoo S.K."/>
            <person name="Teh B.T."/>
            <person name="Yuen S.T."/>
            <person name="Leung S.Y."/>
            <person name="Wooster R."/>
            <person name="Futreal P.A."/>
            <person name="Stratton M.R."/>
        </authorList>
    </citation>
    <scope>VARIANTS [LARGE SCALE ANALYSIS] ARG-149; CYS-306; LEU-307; GLN-336; TYR-677; GLN-678; ARG-768 AND LYS-781</scope>
</reference>
<reference key="10">
    <citation type="journal article" date="2008" name="Hum. Mutat.">
        <title>Frequent mutations in the neurotrophic tyrosine receptor kinase gene family in large cell neuroendocrine carcinoma of the lung.</title>
        <authorList>
            <person name="Marchetti A."/>
            <person name="Felicioni L."/>
            <person name="Pelosi G."/>
            <person name="Del Grammastro M."/>
            <person name="Fumagalli C."/>
            <person name="Sciarrotta M."/>
            <person name="Malatesta S."/>
            <person name="Chella A."/>
            <person name="Barassi F."/>
            <person name="Mucilli F."/>
            <person name="Camplese P."/>
            <person name="D'Antuono T."/>
            <person name="Sacco R."/>
            <person name="Buttitta F."/>
        </authorList>
    </citation>
    <scope>VARIANTS SER-664; TYR-677; CYS-736; PRO-745 AND PHE-766</scope>
</reference>
<sequence length="839" mass="94428">MDVSLCPAKCSFWRIFLLGSVWLDYVGSVLACPANCVCSKTEINCRRPDDGNLFPLLEGQDSGNSNGNASINITDISRNITSIHIENWRSLHTLNAVDMELYTGLQKLTIKNSGLRSIQPRAFAKNPHLRYINLSSNRLTTLSWQLFQTLSLRELQLEQNFFNCSCDIRWMQLWQEQGEAKLNSQNLYCINADGSQLPLFRMNISQCDLPEISVSHVNLTVREGDNAVITCNGSGSPLPDVDWIVTGLQSINTHQTNLNWTNVHAINLTLVNVTSEDNGFTLTCIAENVVGMSNASVALTVYYPPRVVSLEEPELRLEHCIEFVVRGNPPPTLHWLHNGQPLRESKIIHVEYYQEGEISEGCLLFNKPTHYNNGNYTLIAKNPLGTANQTINGHFLKEPFPESTDNFILFDEVSPTPPITVTHKPEEDTFGVSIAVGLAAFACVLLVVLFVMINKYGRRSKFGMKGPVAVISGEEDSASPLHHINHGITTPSSLDAGPDTVVIGMTRIPVIENPQYFRQGHNCHKPDTYVQHIKRRDIVLKRELGEGAFGKVFLAECYNLSPTKDKMLVAVKALKDPTLAARKDFQREAELLTNLQHEHIVKFYGVCGDGDPLIMVFEYMKHGDLNKFLRAHGPDAMILVDGQPRQAKGELGLSQMLHIASQIASGMVYLASQHFVHRDLATRNCLVGANLLVKIGDFGMSRDVYSTDYYRLFNPSGNDFCIWCEVGGHTMLPIRWMPPESIMYRKFTTESDVWSFGVILWEIFTYGKQPWFQLSNTEVIECITQGRVLERPRVCPKEVYDVMLGCWQREPQQRLNIKEIYKILHALGKATPIYLDILG</sequence>
<accession>Q16288</accession>
<accession>B7Z4C5</accession>
<accession>E9PG56</accession>
<accession>H0YND1</accession>
<accession>O75682</accession>
<accession>Q12827</accession>
<accession>Q16289</accession>
<evidence type="ECO:0000250" key="1"/>
<evidence type="ECO:0000250" key="2">
    <source>
        <dbReference type="UniProtKB" id="P04629"/>
    </source>
</evidence>
<evidence type="ECO:0000250" key="3">
    <source>
        <dbReference type="UniProtKB" id="Q03351"/>
    </source>
</evidence>
<evidence type="ECO:0000250" key="4">
    <source>
        <dbReference type="UniProtKB" id="Q6VNS1"/>
    </source>
</evidence>
<evidence type="ECO:0000250" key="5">
    <source>
        <dbReference type="UniProtKB" id="Q91044"/>
    </source>
</evidence>
<evidence type="ECO:0000255" key="6"/>
<evidence type="ECO:0000255" key="7">
    <source>
        <dbReference type="PROSITE-ProRule" id="PRU00114"/>
    </source>
</evidence>
<evidence type="ECO:0000255" key="8">
    <source>
        <dbReference type="PROSITE-ProRule" id="PRU00159"/>
    </source>
</evidence>
<evidence type="ECO:0000255" key="9">
    <source>
        <dbReference type="PROSITE-ProRule" id="PRU10028"/>
    </source>
</evidence>
<evidence type="ECO:0000269" key="10">
    <source>
    </source>
</evidence>
<evidence type="ECO:0000269" key="11">
    <source>
    </source>
</evidence>
<evidence type="ECO:0000269" key="12">
    <source>
    </source>
</evidence>
<evidence type="ECO:0000269" key="13">
    <source>
    </source>
</evidence>
<evidence type="ECO:0000269" key="14">
    <source>
    </source>
</evidence>
<evidence type="ECO:0000303" key="15">
    <source>
    </source>
</evidence>
<evidence type="ECO:0000303" key="16">
    <source>
    </source>
</evidence>
<evidence type="ECO:0000303" key="17">
    <source>
    </source>
</evidence>
<evidence type="ECO:0000305" key="18"/>
<evidence type="ECO:0007744" key="19">
    <source>
        <dbReference type="PDB" id="1WWC"/>
    </source>
</evidence>
<evidence type="ECO:0007829" key="20">
    <source>
        <dbReference type="PDB" id="1WWC"/>
    </source>
</evidence>
<evidence type="ECO:0007829" key="21">
    <source>
        <dbReference type="PDB" id="4YMJ"/>
    </source>
</evidence>
<evidence type="ECO:0007829" key="22">
    <source>
        <dbReference type="PDB" id="6KZD"/>
    </source>
</evidence>
<keyword id="KW-0002">3D-structure</keyword>
<keyword id="KW-0025">Alternative splicing</keyword>
<keyword id="KW-0067">ATP-binding</keyword>
<keyword id="KW-0217">Developmental protein</keyword>
<keyword id="KW-0221">Differentiation</keyword>
<keyword id="KW-0903">Direct protein sequencing</keyword>
<keyword id="KW-1015">Disulfide bond</keyword>
<keyword id="KW-0325">Glycoprotein</keyword>
<keyword id="KW-0393">Immunoglobulin domain</keyword>
<keyword id="KW-0418">Kinase</keyword>
<keyword id="KW-0433">Leucine-rich repeat</keyword>
<keyword id="KW-0472">Membrane</keyword>
<keyword id="KW-0524">Neurogenesis</keyword>
<keyword id="KW-0547">Nucleotide-binding</keyword>
<keyword id="KW-0597">Phosphoprotein</keyword>
<keyword id="KW-1267">Proteomics identification</keyword>
<keyword id="KW-0675">Receptor</keyword>
<keyword id="KW-1185">Reference proteome</keyword>
<keyword id="KW-0677">Repeat</keyword>
<keyword id="KW-0732">Signal</keyword>
<keyword id="KW-0808">Transferase</keyword>
<keyword id="KW-0812">Transmembrane</keyword>
<keyword id="KW-1133">Transmembrane helix</keyword>
<keyword id="KW-0829">Tyrosine-protein kinase</keyword>
<gene>
    <name type="primary">NTRK3</name>
    <name type="synonym">TRKC</name>
</gene>
<dbReference type="EC" id="2.7.10.1"/>
<dbReference type="EMBL" id="U05012">
    <property type="protein sequence ID" value="AAA75374.1"/>
    <property type="molecule type" value="mRNA"/>
</dbReference>
<dbReference type="EMBL" id="S76475">
    <property type="protein sequence ID" value="AAB33111.1"/>
    <property type="molecule type" value="mRNA"/>
</dbReference>
<dbReference type="EMBL" id="S76476">
    <property type="protein sequence ID" value="AAB33112.1"/>
    <property type="molecule type" value="mRNA"/>
</dbReference>
<dbReference type="EMBL" id="AJ224521">
    <property type="protein sequence ID" value="CAA12029.1"/>
    <property type="molecule type" value="Genomic_DNA"/>
</dbReference>
<dbReference type="EMBL" id="AJ224522">
    <property type="protein sequence ID" value="CAA12029.1"/>
    <property type="status" value="JOINED"/>
    <property type="molecule type" value="Genomic_DNA"/>
</dbReference>
<dbReference type="EMBL" id="AJ224523">
    <property type="protein sequence ID" value="CAA12029.1"/>
    <property type="status" value="JOINED"/>
    <property type="molecule type" value="Genomic_DNA"/>
</dbReference>
<dbReference type="EMBL" id="AJ224524">
    <property type="protein sequence ID" value="CAA12029.1"/>
    <property type="status" value="JOINED"/>
    <property type="molecule type" value="Genomic_DNA"/>
</dbReference>
<dbReference type="EMBL" id="AJ224525">
    <property type="protein sequence ID" value="CAA12029.1"/>
    <property type="status" value="JOINED"/>
    <property type="molecule type" value="Genomic_DNA"/>
</dbReference>
<dbReference type="EMBL" id="AJ224526">
    <property type="protein sequence ID" value="CAA12029.1"/>
    <property type="status" value="JOINED"/>
    <property type="molecule type" value="Genomic_DNA"/>
</dbReference>
<dbReference type="EMBL" id="AJ224527">
    <property type="protein sequence ID" value="CAA12029.1"/>
    <property type="status" value="JOINED"/>
    <property type="molecule type" value="Genomic_DNA"/>
</dbReference>
<dbReference type="EMBL" id="AJ224528">
    <property type="protein sequence ID" value="CAA12029.1"/>
    <property type="status" value="JOINED"/>
    <property type="molecule type" value="Genomic_DNA"/>
</dbReference>
<dbReference type="EMBL" id="AJ224529">
    <property type="protein sequence ID" value="CAA12029.1"/>
    <property type="status" value="JOINED"/>
    <property type="molecule type" value="Genomic_DNA"/>
</dbReference>
<dbReference type="EMBL" id="AJ224530">
    <property type="protein sequence ID" value="CAA12029.1"/>
    <property type="status" value="JOINED"/>
    <property type="molecule type" value="Genomic_DNA"/>
</dbReference>
<dbReference type="EMBL" id="AJ224531">
    <property type="protein sequence ID" value="CAA12029.1"/>
    <property type="status" value="JOINED"/>
    <property type="molecule type" value="Genomic_DNA"/>
</dbReference>
<dbReference type="EMBL" id="AJ224532">
    <property type="protein sequence ID" value="CAA12029.1"/>
    <property type="status" value="JOINED"/>
    <property type="molecule type" value="Genomic_DNA"/>
</dbReference>
<dbReference type="EMBL" id="AJ224533">
    <property type="protein sequence ID" value="CAA12029.1"/>
    <property type="status" value="JOINED"/>
    <property type="molecule type" value="Genomic_DNA"/>
</dbReference>
<dbReference type="EMBL" id="AJ224534">
    <property type="protein sequence ID" value="CAA12029.1"/>
    <property type="status" value="JOINED"/>
    <property type="molecule type" value="Genomic_DNA"/>
</dbReference>
<dbReference type="EMBL" id="AJ224535">
    <property type="protein sequence ID" value="CAA12029.1"/>
    <property type="status" value="JOINED"/>
    <property type="molecule type" value="Genomic_DNA"/>
</dbReference>
<dbReference type="EMBL" id="AK297160">
    <property type="protein sequence ID" value="BAH12511.1"/>
    <property type="molecule type" value="mRNA"/>
</dbReference>
<dbReference type="EMBL" id="AC009711">
    <property type="status" value="NOT_ANNOTATED_CDS"/>
    <property type="molecule type" value="Genomic_DNA"/>
</dbReference>
<dbReference type="EMBL" id="AC011966">
    <property type="status" value="NOT_ANNOTATED_CDS"/>
    <property type="molecule type" value="Genomic_DNA"/>
</dbReference>
<dbReference type="EMBL" id="AC021677">
    <property type="status" value="NOT_ANNOTATED_CDS"/>
    <property type="molecule type" value="Genomic_DNA"/>
</dbReference>
<dbReference type="CCDS" id="CCDS10340.1">
    <molecule id="Q16288-3"/>
</dbReference>
<dbReference type="CCDS" id="CCDS32322.1">
    <molecule id="Q16288-1"/>
</dbReference>
<dbReference type="CCDS" id="CCDS32323.1">
    <molecule id="Q16288-2"/>
</dbReference>
<dbReference type="CCDS" id="CCDS58399.1">
    <molecule id="Q16288-5"/>
</dbReference>
<dbReference type="PIR" id="A55178">
    <property type="entry name" value="A55178"/>
</dbReference>
<dbReference type="PIR" id="I73632">
    <property type="entry name" value="I73632"/>
</dbReference>
<dbReference type="PIR" id="I73633">
    <property type="entry name" value="I73633"/>
</dbReference>
<dbReference type="RefSeq" id="NP_001007157.1">
    <molecule id="Q16288-2"/>
    <property type="nucleotide sequence ID" value="NM_001007156.3"/>
</dbReference>
<dbReference type="RefSeq" id="NP_001012338.1">
    <molecule id="Q16288-1"/>
    <property type="nucleotide sequence ID" value="NM_001012338.3"/>
</dbReference>
<dbReference type="RefSeq" id="NP_001230030.1">
    <molecule id="Q16288-5"/>
    <property type="nucleotide sequence ID" value="NM_001243101.2"/>
</dbReference>
<dbReference type="RefSeq" id="NP_001307063.1">
    <property type="nucleotide sequence ID" value="NM_001320134.1"/>
</dbReference>
<dbReference type="RefSeq" id="NP_001307064.1">
    <property type="nucleotide sequence ID" value="NM_001320135.1"/>
</dbReference>
<dbReference type="RefSeq" id="NP_001362739.1">
    <molecule id="Q16288-1"/>
    <property type="nucleotide sequence ID" value="NM_001375810.1"/>
</dbReference>
<dbReference type="RefSeq" id="NP_001362740.1">
    <molecule id="Q16288-3"/>
    <property type="nucleotide sequence ID" value="NM_001375811.1"/>
</dbReference>
<dbReference type="RefSeq" id="NP_001362741.1">
    <molecule id="Q16288-5"/>
    <property type="nucleotide sequence ID" value="NM_001375812.1"/>
</dbReference>
<dbReference type="RefSeq" id="NP_001362742.1">
    <molecule id="Q16288-2"/>
    <property type="nucleotide sequence ID" value="NM_001375813.1"/>
</dbReference>
<dbReference type="RefSeq" id="NP_002521.2">
    <molecule id="Q16288-3"/>
    <property type="nucleotide sequence ID" value="NM_002530.4"/>
</dbReference>
<dbReference type="RefSeq" id="XP_016877729.1">
    <molecule id="Q16288-3"/>
    <property type="nucleotide sequence ID" value="XM_017022240.2"/>
</dbReference>
<dbReference type="RefSeq" id="XP_016877742.1">
    <property type="nucleotide sequence ID" value="XM_017022253.1"/>
</dbReference>
<dbReference type="RefSeq" id="XP_024305702.1">
    <molecule id="Q16288-2"/>
    <property type="nucleotide sequence ID" value="XM_024449934.2"/>
</dbReference>
<dbReference type="RefSeq" id="XP_054234029.1">
    <molecule id="Q16288-3"/>
    <property type="nucleotide sequence ID" value="XM_054378054.1"/>
</dbReference>
<dbReference type="RefSeq" id="XP_054234036.1">
    <molecule id="Q16288-2"/>
    <property type="nucleotide sequence ID" value="XM_054378061.1"/>
</dbReference>
<dbReference type="PDB" id="1WWC">
    <property type="method" value="X-ray"/>
    <property type="resolution" value="1.90 A"/>
    <property type="chains" value="A=297-422"/>
</dbReference>
<dbReference type="PDB" id="3V5Q">
    <property type="method" value="X-ray"/>
    <property type="resolution" value="2.20 A"/>
    <property type="chains" value="A/B=530-832"/>
</dbReference>
<dbReference type="PDB" id="4YMJ">
    <property type="method" value="X-ray"/>
    <property type="resolution" value="2.00 A"/>
    <property type="chains" value="A/B=530-839"/>
</dbReference>
<dbReference type="PDB" id="6KZC">
    <property type="method" value="X-ray"/>
    <property type="resolution" value="2.00 A"/>
    <property type="chains" value="A=528-839"/>
</dbReference>
<dbReference type="PDB" id="6KZD">
    <property type="method" value="X-ray"/>
    <property type="resolution" value="1.71 A"/>
    <property type="chains" value="A=528-839"/>
</dbReference>
<dbReference type="PDBsum" id="1WWC"/>
<dbReference type="PDBsum" id="3V5Q"/>
<dbReference type="PDBsum" id="4YMJ"/>
<dbReference type="PDBsum" id="6KZC"/>
<dbReference type="PDBsum" id="6KZD"/>
<dbReference type="SMR" id="Q16288"/>
<dbReference type="BioGRID" id="110971">
    <property type="interactions" value="371"/>
</dbReference>
<dbReference type="DIP" id="DIP-5723N"/>
<dbReference type="FunCoup" id="Q16288">
    <property type="interactions" value="657"/>
</dbReference>
<dbReference type="IntAct" id="Q16288">
    <property type="interactions" value="348"/>
</dbReference>
<dbReference type="MINT" id="Q16288"/>
<dbReference type="STRING" id="9606.ENSP00000354207"/>
<dbReference type="BindingDB" id="Q16288"/>
<dbReference type="ChEMBL" id="CHEMBL5608"/>
<dbReference type="DrugBank" id="DB17191">
    <property type="generic name" value="Altiratinib"/>
</dbReference>
<dbReference type="DrugBank" id="DB11986">
    <property type="generic name" value="Entrectinib"/>
</dbReference>
<dbReference type="DrugBank" id="DB12010">
    <property type="generic name" value="Fostamatinib"/>
</dbReference>
<dbReference type="DrugBank" id="DB16056">
    <property type="generic name" value="GZ-389988"/>
</dbReference>
<dbReference type="DrugBank" id="DB17140">
    <property type="generic name" value="JNJ-28312141"/>
</dbReference>
<dbReference type="DrugBank" id="DB14723">
    <property type="generic name" value="Larotrectinib"/>
</dbReference>
<dbReference type="DrugBank" id="DB15822">
    <property type="generic name" value="Pralsetinib"/>
</dbReference>
<dbReference type="DrugBank" id="DB16826">
    <property type="generic name" value="Repotrectinib"/>
</dbReference>
<dbReference type="DrugCentral" id="Q16288"/>
<dbReference type="GuidetoPHARMACOLOGY" id="1819"/>
<dbReference type="GlyCosmos" id="Q16288">
    <property type="glycosylation" value="13 sites, No reported glycans"/>
</dbReference>
<dbReference type="GlyGen" id="Q16288">
    <property type="glycosylation" value="14 sites, 2 N-linked glycans (1 site)"/>
</dbReference>
<dbReference type="iPTMnet" id="Q16288"/>
<dbReference type="PhosphoSitePlus" id="Q16288"/>
<dbReference type="BioMuta" id="NTRK3"/>
<dbReference type="DMDM" id="134035335"/>
<dbReference type="CPTAC" id="CPTAC-3001"/>
<dbReference type="CPTAC" id="CPTAC-3002"/>
<dbReference type="jPOST" id="Q16288"/>
<dbReference type="MassIVE" id="Q16288"/>
<dbReference type="PaxDb" id="9606-ENSP00000354207"/>
<dbReference type="PeptideAtlas" id="Q16288"/>
<dbReference type="ProteomicsDB" id="20249"/>
<dbReference type="ProteomicsDB" id="40524"/>
<dbReference type="ProteomicsDB" id="60850">
    <molecule id="Q16288-1"/>
</dbReference>
<dbReference type="ProteomicsDB" id="60851">
    <molecule id="Q16288-2"/>
</dbReference>
<dbReference type="ProteomicsDB" id="60852">
    <molecule id="Q16288-3"/>
</dbReference>
<dbReference type="ProteomicsDB" id="60853">
    <molecule id="Q16288-4"/>
</dbReference>
<dbReference type="ABCD" id="Q16288">
    <property type="antibodies" value="8 sequenced antibodies"/>
</dbReference>
<dbReference type="Antibodypedia" id="3979">
    <property type="antibodies" value="850 antibodies from 42 providers"/>
</dbReference>
<dbReference type="DNASU" id="4916"/>
<dbReference type="Ensembl" id="ENST00000317501.9">
    <molecule id="Q16288-2"/>
    <property type="protein sequence ID" value="ENSP00000318328.3"/>
    <property type="gene ID" value="ENSG00000140538.17"/>
</dbReference>
<dbReference type="Ensembl" id="ENST00000357724.6">
    <molecule id="Q16288-4"/>
    <property type="protein sequence ID" value="ENSP00000350356.2"/>
    <property type="gene ID" value="ENSG00000140538.17"/>
</dbReference>
<dbReference type="Ensembl" id="ENST00000394480.6">
    <molecule id="Q16288-3"/>
    <property type="protein sequence ID" value="ENSP00000377990.1"/>
    <property type="gene ID" value="ENSG00000140538.17"/>
</dbReference>
<dbReference type="Ensembl" id="ENST00000557856.5">
    <molecule id="Q16288-5"/>
    <property type="protein sequence ID" value="ENSP00000453959.1"/>
    <property type="gene ID" value="ENSG00000140538.17"/>
</dbReference>
<dbReference type="Ensembl" id="ENST00000629765.3">
    <molecule id="Q16288-1"/>
    <property type="protein sequence ID" value="ENSP00000485864.1"/>
    <property type="gene ID" value="ENSG00000140538.17"/>
</dbReference>
<dbReference type="Ensembl" id="ENST00000695462.1">
    <molecule id="Q16288-1"/>
    <property type="protein sequence ID" value="ENSP00000511942.1"/>
    <property type="gene ID" value="ENSG00000140538.17"/>
</dbReference>
<dbReference type="GeneID" id="4916"/>
<dbReference type="KEGG" id="hsa:4916"/>
<dbReference type="MANE-Select" id="ENST00000629765.3">
    <property type="protein sequence ID" value="ENSP00000485864.1"/>
    <property type="RefSeq nucleotide sequence ID" value="NM_001012338.3"/>
    <property type="RefSeq protein sequence ID" value="NP_001012338.1"/>
</dbReference>
<dbReference type="UCSC" id="uc059mwc.1">
    <molecule id="Q16288-1"/>
    <property type="organism name" value="human"/>
</dbReference>
<dbReference type="AGR" id="HGNC:8033"/>
<dbReference type="CTD" id="4916"/>
<dbReference type="DisGeNET" id="4916"/>
<dbReference type="GeneCards" id="NTRK3"/>
<dbReference type="HGNC" id="HGNC:8033">
    <property type="gene designation" value="NTRK3"/>
</dbReference>
<dbReference type="HPA" id="ENSG00000140538">
    <property type="expression patterns" value="Tissue enhanced (brain)"/>
</dbReference>
<dbReference type="MalaCards" id="NTRK3"/>
<dbReference type="MIM" id="191316">
    <property type="type" value="gene"/>
</dbReference>
<dbReference type="neXtProt" id="NX_Q16288"/>
<dbReference type="OpenTargets" id="ENSG00000140538"/>
<dbReference type="Orphanet" id="2665">
    <property type="disease" value="Congenital mesoblastic nephroma"/>
</dbReference>
<dbReference type="Orphanet" id="146">
    <property type="disease" value="Differentiated thyroid carcinoma"/>
</dbReference>
<dbReference type="Orphanet" id="2030">
    <property type="disease" value="Fibrosarcoma"/>
</dbReference>
<dbReference type="PharmGKB" id="PA31819"/>
<dbReference type="VEuPathDB" id="HostDB:ENSG00000140538"/>
<dbReference type="eggNOG" id="KOG1026">
    <property type="taxonomic scope" value="Eukaryota"/>
</dbReference>
<dbReference type="GeneTree" id="ENSGT00940000155645"/>
<dbReference type="HOGENOM" id="CLU_000288_74_1_1"/>
<dbReference type="InParanoid" id="Q16288"/>
<dbReference type="OMA" id="YREVTHP"/>
<dbReference type="OrthoDB" id="10005095at2759"/>
<dbReference type="PAN-GO" id="Q16288">
    <property type="GO annotations" value="13 GO annotations based on evolutionary models"/>
</dbReference>
<dbReference type="PhylomeDB" id="Q16288"/>
<dbReference type="TreeFam" id="TF106465"/>
<dbReference type="BRENDA" id="2.7.10.1">
    <property type="organism ID" value="2681"/>
</dbReference>
<dbReference type="PathwayCommons" id="Q16288"/>
<dbReference type="Reactome" id="R-HSA-1257604">
    <property type="pathway name" value="PIP3 activates AKT signaling"/>
</dbReference>
<dbReference type="Reactome" id="R-HSA-2219530">
    <property type="pathway name" value="Constitutive Signaling by Aberrant PI3K in Cancer"/>
</dbReference>
<dbReference type="Reactome" id="R-HSA-388844">
    <property type="pathway name" value="Receptor-type tyrosine-protein phosphatases"/>
</dbReference>
<dbReference type="Reactome" id="R-HSA-6811558">
    <property type="pathway name" value="PI5P, PP2A and IER3 Regulate PI3K/AKT Signaling"/>
</dbReference>
<dbReference type="Reactome" id="R-HSA-9034013">
    <property type="pathway name" value="NTF3 activates NTRK3 signaling"/>
</dbReference>
<dbReference type="Reactome" id="R-HSA-9034015">
    <property type="pathway name" value="Signaling by NTRK3 (TRKC)"/>
</dbReference>
<dbReference type="Reactome" id="R-HSA-9034793">
    <property type="pathway name" value="Activated NTRK3 signals through PLCG1"/>
</dbReference>
<dbReference type="Reactome" id="R-HSA-9034864">
    <property type="pathway name" value="Activated NTRK3 signals through RAS"/>
</dbReference>
<dbReference type="Reactome" id="R-HSA-9603381">
    <property type="pathway name" value="Activated NTRK3 signals through PI3K"/>
</dbReference>
<dbReference type="Reactome" id="R-HSA-9603505">
    <property type="pathway name" value="NTRK3 as a dependence receptor"/>
</dbReference>
<dbReference type="SignaLink" id="Q16288"/>
<dbReference type="SIGNOR" id="Q16288"/>
<dbReference type="BioGRID-ORCS" id="4916">
    <property type="hits" value="12 hits in 1191 CRISPR screens"/>
</dbReference>
<dbReference type="ChiTaRS" id="NTRK3">
    <property type="organism name" value="human"/>
</dbReference>
<dbReference type="EvolutionaryTrace" id="Q16288"/>
<dbReference type="GeneWiki" id="TrkC_receptor"/>
<dbReference type="GenomeRNAi" id="4916"/>
<dbReference type="Pharos" id="Q16288">
    <property type="development level" value="Tclin"/>
</dbReference>
<dbReference type="PRO" id="PR:Q16288"/>
<dbReference type="Proteomes" id="UP000005640">
    <property type="component" value="Chromosome 15"/>
</dbReference>
<dbReference type="RNAct" id="Q16288">
    <property type="molecule type" value="protein"/>
</dbReference>
<dbReference type="Bgee" id="ENSG00000140538">
    <property type="expression patterns" value="Expressed in Brodmann (1909) area 10 and 175 other cell types or tissues"/>
</dbReference>
<dbReference type="ExpressionAtlas" id="Q16288">
    <property type="expression patterns" value="baseline and differential"/>
</dbReference>
<dbReference type="GO" id="GO:0030424">
    <property type="term" value="C:axon"/>
    <property type="evidence" value="ECO:0000318"/>
    <property type="project" value="GO_Central"/>
</dbReference>
<dbReference type="GO" id="GO:0005737">
    <property type="term" value="C:cytoplasm"/>
    <property type="evidence" value="ECO:0007669"/>
    <property type="project" value="Ensembl"/>
</dbReference>
<dbReference type="GO" id="GO:0098978">
    <property type="term" value="C:glutamatergic synapse"/>
    <property type="evidence" value="ECO:0007669"/>
    <property type="project" value="Ensembl"/>
</dbReference>
<dbReference type="GO" id="GO:0005886">
    <property type="term" value="C:plasma membrane"/>
    <property type="evidence" value="ECO:0000318"/>
    <property type="project" value="GO_Central"/>
</dbReference>
<dbReference type="GO" id="GO:0045211">
    <property type="term" value="C:postsynaptic membrane"/>
    <property type="evidence" value="ECO:0007669"/>
    <property type="project" value="Ensembl"/>
</dbReference>
<dbReference type="GO" id="GO:0043235">
    <property type="term" value="C:receptor complex"/>
    <property type="evidence" value="ECO:0000314"/>
    <property type="project" value="MGI"/>
</dbReference>
<dbReference type="GO" id="GO:0005524">
    <property type="term" value="F:ATP binding"/>
    <property type="evidence" value="ECO:0007669"/>
    <property type="project" value="UniProtKB-KW"/>
</dbReference>
<dbReference type="GO" id="GO:0005004">
    <property type="term" value="F:GPI-linked ephrin receptor activity"/>
    <property type="evidence" value="ECO:0007669"/>
    <property type="project" value="Ensembl"/>
</dbReference>
<dbReference type="GO" id="GO:0043121">
    <property type="term" value="F:neurotrophin binding"/>
    <property type="evidence" value="ECO:0000318"/>
    <property type="project" value="GO_Central"/>
</dbReference>
<dbReference type="GO" id="GO:0005030">
    <property type="term" value="F:neurotrophin receptor activity"/>
    <property type="evidence" value="ECO:0000314"/>
    <property type="project" value="BHF-UCL"/>
</dbReference>
<dbReference type="GO" id="GO:0002039">
    <property type="term" value="F:p53 binding"/>
    <property type="evidence" value="ECO:0000353"/>
    <property type="project" value="BHF-UCL"/>
</dbReference>
<dbReference type="GO" id="GO:0004714">
    <property type="term" value="F:transmembrane receptor protein tyrosine kinase activity"/>
    <property type="evidence" value="ECO:0000318"/>
    <property type="project" value="GO_Central"/>
</dbReference>
<dbReference type="GO" id="GO:0048677">
    <property type="term" value="P:axon extension involved in regeneration"/>
    <property type="evidence" value="ECO:0007669"/>
    <property type="project" value="Ensembl"/>
</dbReference>
<dbReference type="GO" id="GO:0007169">
    <property type="term" value="P:cell surface receptor protein tyrosine kinase signaling pathway"/>
    <property type="evidence" value="ECO:0000314"/>
    <property type="project" value="BHF-UCL"/>
</dbReference>
<dbReference type="GO" id="GO:1990090">
    <property type="term" value="P:cellular response to nerve growth factor stimulus"/>
    <property type="evidence" value="ECO:0000318"/>
    <property type="project" value="GO_Central"/>
</dbReference>
<dbReference type="GO" id="GO:0071300">
    <property type="term" value="P:cellular response to retinoic acid"/>
    <property type="evidence" value="ECO:0007669"/>
    <property type="project" value="Ensembl"/>
</dbReference>
<dbReference type="GO" id="GO:0007623">
    <property type="term" value="P:circadian rhythm"/>
    <property type="evidence" value="ECO:0007669"/>
    <property type="project" value="Ensembl"/>
</dbReference>
<dbReference type="GO" id="GO:0090102">
    <property type="term" value="P:cochlea development"/>
    <property type="evidence" value="ECO:0007669"/>
    <property type="project" value="Ensembl"/>
</dbReference>
<dbReference type="GO" id="GO:0007507">
    <property type="term" value="P:heart development"/>
    <property type="evidence" value="ECO:0000315"/>
    <property type="project" value="UniProtKB"/>
</dbReference>
<dbReference type="GO" id="GO:0070306">
    <property type="term" value="P:lens fiber cell differentiation"/>
    <property type="evidence" value="ECO:0007669"/>
    <property type="project" value="Ensembl"/>
</dbReference>
<dbReference type="GO" id="GO:0042490">
    <property type="term" value="P:mechanoreceptor differentiation"/>
    <property type="evidence" value="ECO:0007669"/>
    <property type="project" value="Ensembl"/>
</dbReference>
<dbReference type="GO" id="GO:0022011">
    <property type="term" value="P:myelination in peripheral nervous system"/>
    <property type="evidence" value="ECO:0007669"/>
    <property type="project" value="Ensembl"/>
</dbReference>
<dbReference type="GO" id="GO:0048712">
    <property type="term" value="P:negative regulation of astrocyte differentiation"/>
    <property type="evidence" value="ECO:0007669"/>
    <property type="project" value="Ensembl"/>
</dbReference>
<dbReference type="GO" id="GO:0048665">
    <property type="term" value="P:neuron fate specification"/>
    <property type="evidence" value="ECO:0007669"/>
    <property type="project" value="Ensembl"/>
</dbReference>
<dbReference type="GO" id="GO:0001764">
    <property type="term" value="P:neuron migration"/>
    <property type="evidence" value="ECO:0007669"/>
    <property type="project" value="Ensembl"/>
</dbReference>
<dbReference type="GO" id="GO:0019227">
    <property type="term" value="P:neuronal action potential propagation"/>
    <property type="evidence" value="ECO:0007669"/>
    <property type="project" value="Ensembl"/>
</dbReference>
<dbReference type="GO" id="GO:0043065">
    <property type="term" value="P:positive regulation of apoptotic process"/>
    <property type="evidence" value="ECO:0007669"/>
    <property type="project" value="Ensembl"/>
</dbReference>
<dbReference type="GO" id="GO:0048691">
    <property type="term" value="P:positive regulation of axon extension involved in regeneration"/>
    <property type="evidence" value="ECO:0007669"/>
    <property type="project" value="Ensembl"/>
</dbReference>
<dbReference type="GO" id="GO:0030335">
    <property type="term" value="P:positive regulation of cell migration"/>
    <property type="evidence" value="ECO:0000314"/>
    <property type="project" value="BHF-UCL"/>
</dbReference>
<dbReference type="GO" id="GO:0008284">
    <property type="term" value="P:positive regulation of cell population proliferation"/>
    <property type="evidence" value="ECO:0000314"/>
    <property type="project" value="BHF-UCL"/>
</dbReference>
<dbReference type="GO" id="GO:0010628">
    <property type="term" value="P:positive regulation of gene expression"/>
    <property type="evidence" value="ECO:0000314"/>
    <property type="project" value="BHF-UCL"/>
</dbReference>
<dbReference type="GO" id="GO:0043410">
    <property type="term" value="P:positive regulation of MAPK cascade"/>
    <property type="evidence" value="ECO:0000314"/>
    <property type="project" value="BHF-UCL"/>
</dbReference>
<dbReference type="GO" id="GO:0010976">
    <property type="term" value="P:positive regulation of neuron projection development"/>
    <property type="evidence" value="ECO:0000318"/>
    <property type="project" value="GO_Central"/>
</dbReference>
<dbReference type="GO" id="GO:0051897">
    <property type="term" value="P:positive regulation of phosphatidylinositol 3-kinase/protein kinase B signal transduction"/>
    <property type="evidence" value="ECO:0000314"/>
    <property type="project" value="BHF-UCL"/>
</dbReference>
<dbReference type="GO" id="GO:0050927">
    <property type="term" value="P:positive regulation of positive chemotaxis"/>
    <property type="evidence" value="ECO:0000314"/>
    <property type="project" value="BHF-UCL"/>
</dbReference>
<dbReference type="GO" id="GO:0051965">
    <property type="term" value="P:positive regulation of synapse assembly"/>
    <property type="evidence" value="ECO:0007669"/>
    <property type="project" value="Ensembl"/>
</dbReference>
<dbReference type="GO" id="GO:0097107">
    <property type="term" value="P:postsynaptic density assembly"/>
    <property type="evidence" value="ECO:0007669"/>
    <property type="project" value="Ensembl"/>
</dbReference>
<dbReference type="GO" id="GO:2000177">
    <property type="term" value="P:regulation of neural precursor cell proliferation"/>
    <property type="evidence" value="ECO:0007669"/>
    <property type="project" value="Ensembl"/>
</dbReference>
<dbReference type="GO" id="GO:1905606">
    <property type="term" value="P:regulation of presynapse assembly"/>
    <property type="evidence" value="ECO:0007669"/>
    <property type="project" value="Ensembl"/>
</dbReference>
<dbReference type="GO" id="GO:0051412">
    <property type="term" value="P:response to corticosterone"/>
    <property type="evidence" value="ECO:0007669"/>
    <property type="project" value="Ensembl"/>
</dbReference>
<dbReference type="GO" id="GO:0045471">
    <property type="term" value="P:response to ethanol"/>
    <property type="evidence" value="ECO:0007669"/>
    <property type="project" value="Ensembl"/>
</dbReference>
<dbReference type="CDD" id="cd04971">
    <property type="entry name" value="IgI_TrKABC_d5"/>
    <property type="match status" value="1"/>
</dbReference>
<dbReference type="CDD" id="cd05094">
    <property type="entry name" value="PTKc_TrkC"/>
    <property type="match status" value="1"/>
</dbReference>
<dbReference type="FunFam" id="1.10.510.10:FF:000701">
    <property type="entry name" value="Tyrosine-protein kinase receptor"/>
    <property type="match status" value="1"/>
</dbReference>
<dbReference type="FunFam" id="2.60.40.10:FF:000251">
    <property type="entry name" value="Tyrosine-protein kinase receptor"/>
    <property type="match status" value="1"/>
</dbReference>
<dbReference type="FunFam" id="2.60.40.10:FF:000265">
    <property type="entry name" value="Tyrosine-protein kinase receptor"/>
    <property type="match status" value="1"/>
</dbReference>
<dbReference type="FunFam" id="3.30.200.20:FF:000033">
    <property type="entry name" value="Tyrosine-protein kinase receptor"/>
    <property type="match status" value="1"/>
</dbReference>
<dbReference type="FunFam" id="3.80.10.10:FF:000035">
    <property type="entry name" value="Tyrosine-protein kinase receptor"/>
    <property type="match status" value="1"/>
</dbReference>
<dbReference type="Gene3D" id="2.60.40.10">
    <property type="entry name" value="Immunoglobulins"/>
    <property type="match status" value="2"/>
</dbReference>
<dbReference type="Gene3D" id="3.30.200.20">
    <property type="entry name" value="Phosphorylase Kinase, domain 1"/>
    <property type="match status" value="1"/>
</dbReference>
<dbReference type="Gene3D" id="3.80.10.10">
    <property type="entry name" value="Ribonuclease Inhibitor"/>
    <property type="match status" value="1"/>
</dbReference>
<dbReference type="Gene3D" id="1.10.510.10">
    <property type="entry name" value="Transferase(Phosphotransferase) domain 1"/>
    <property type="match status" value="1"/>
</dbReference>
<dbReference type="InterPro" id="IPR000483">
    <property type="entry name" value="Cys-rich_flank_reg_C"/>
</dbReference>
<dbReference type="InterPro" id="IPR007110">
    <property type="entry name" value="Ig-like_dom"/>
</dbReference>
<dbReference type="InterPro" id="IPR036179">
    <property type="entry name" value="Ig-like_dom_sf"/>
</dbReference>
<dbReference type="InterPro" id="IPR013783">
    <property type="entry name" value="Ig-like_fold"/>
</dbReference>
<dbReference type="InterPro" id="IPR013098">
    <property type="entry name" value="Ig_I-set"/>
</dbReference>
<dbReference type="InterPro" id="IPR003599">
    <property type="entry name" value="Ig_sub"/>
</dbReference>
<dbReference type="InterPro" id="IPR013151">
    <property type="entry name" value="Immunoglobulin_dom"/>
</dbReference>
<dbReference type="InterPro" id="IPR011009">
    <property type="entry name" value="Kinase-like_dom_sf"/>
</dbReference>
<dbReference type="InterPro" id="IPR001611">
    <property type="entry name" value="Leu-rich_rpt"/>
</dbReference>
<dbReference type="InterPro" id="IPR032675">
    <property type="entry name" value="LRR_dom_sf"/>
</dbReference>
<dbReference type="InterPro" id="IPR000372">
    <property type="entry name" value="LRRNT"/>
</dbReference>
<dbReference type="InterPro" id="IPR020777">
    <property type="entry name" value="NTRK"/>
</dbReference>
<dbReference type="InterPro" id="IPR020446">
    <property type="entry name" value="NTRK3"/>
</dbReference>
<dbReference type="InterPro" id="IPR031635">
    <property type="entry name" value="NTRK_LRRCT"/>
</dbReference>
<dbReference type="InterPro" id="IPR000719">
    <property type="entry name" value="Prot_kinase_dom"/>
</dbReference>
<dbReference type="InterPro" id="IPR017441">
    <property type="entry name" value="Protein_kinase_ATP_BS"/>
</dbReference>
<dbReference type="InterPro" id="IPR050122">
    <property type="entry name" value="RTK"/>
</dbReference>
<dbReference type="InterPro" id="IPR001245">
    <property type="entry name" value="Ser-Thr/Tyr_kinase_cat_dom"/>
</dbReference>
<dbReference type="InterPro" id="IPR008266">
    <property type="entry name" value="Tyr_kinase_AS"/>
</dbReference>
<dbReference type="InterPro" id="IPR020635">
    <property type="entry name" value="Tyr_kinase_cat_dom"/>
</dbReference>
<dbReference type="InterPro" id="IPR002011">
    <property type="entry name" value="Tyr_kinase_rcpt_2_CS"/>
</dbReference>
<dbReference type="PANTHER" id="PTHR24416:SF66">
    <property type="entry name" value="NT-3 GROWTH FACTOR RECEPTOR"/>
    <property type="match status" value="1"/>
</dbReference>
<dbReference type="PANTHER" id="PTHR24416">
    <property type="entry name" value="TYROSINE-PROTEIN KINASE RECEPTOR"/>
    <property type="match status" value="1"/>
</dbReference>
<dbReference type="Pfam" id="PF07679">
    <property type="entry name" value="I-set"/>
    <property type="match status" value="1"/>
</dbReference>
<dbReference type="Pfam" id="PF00047">
    <property type="entry name" value="ig"/>
    <property type="match status" value="1"/>
</dbReference>
<dbReference type="Pfam" id="PF13855">
    <property type="entry name" value="LRR_8"/>
    <property type="match status" value="1"/>
</dbReference>
<dbReference type="Pfam" id="PF16920">
    <property type="entry name" value="LRRCT_2"/>
    <property type="match status" value="1"/>
</dbReference>
<dbReference type="Pfam" id="PF01462">
    <property type="entry name" value="LRRNT"/>
    <property type="match status" value="1"/>
</dbReference>
<dbReference type="Pfam" id="PF07714">
    <property type="entry name" value="PK_Tyr_Ser-Thr"/>
    <property type="match status" value="1"/>
</dbReference>
<dbReference type="PRINTS" id="PR01939">
    <property type="entry name" value="NTKRECEPTOR"/>
</dbReference>
<dbReference type="PRINTS" id="PR01942">
    <property type="entry name" value="NTKRECEPTOR3"/>
</dbReference>
<dbReference type="PRINTS" id="PR00109">
    <property type="entry name" value="TYRKINASE"/>
</dbReference>
<dbReference type="SMART" id="SM00409">
    <property type="entry name" value="IG"/>
    <property type="match status" value="1"/>
</dbReference>
<dbReference type="SMART" id="SM00082">
    <property type="entry name" value="LRRCT"/>
    <property type="match status" value="1"/>
</dbReference>
<dbReference type="SMART" id="SM00013">
    <property type="entry name" value="LRRNT"/>
    <property type="match status" value="1"/>
</dbReference>
<dbReference type="SMART" id="SM00219">
    <property type="entry name" value="TyrKc"/>
    <property type="match status" value="1"/>
</dbReference>
<dbReference type="SUPFAM" id="SSF48726">
    <property type="entry name" value="Immunoglobulin"/>
    <property type="match status" value="2"/>
</dbReference>
<dbReference type="SUPFAM" id="SSF52058">
    <property type="entry name" value="L domain-like"/>
    <property type="match status" value="1"/>
</dbReference>
<dbReference type="SUPFAM" id="SSF56112">
    <property type="entry name" value="Protein kinase-like (PK-like)"/>
    <property type="match status" value="1"/>
</dbReference>
<dbReference type="PROSITE" id="PS50835">
    <property type="entry name" value="IG_LIKE"/>
    <property type="match status" value="1"/>
</dbReference>
<dbReference type="PROSITE" id="PS51450">
    <property type="entry name" value="LRR"/>
    <property type="match status" value="1"/>
</dbReference>
<dbReference type="PROSITE" id="PS00107">
    <property type="entry name" value="PROTEIN_KINASE_ATP"/>
    <property type="match status" value="1"/>
</dbReference>
<dbReference type="PROSITE" id="PS50011">
    <property type="entry name" value="PROTEIN_KINASE_DOM"/>
    <property type="match status" value="1"/>
</dbReference>
<dbReference type="PROSITE" id="PS00109">
    <property type="entry name" value="PROTEIN_KINASE_TYR"/>
    <property type="match status" value="1"/>
</dbReference>
<dbReference type="PROSITE" id="PS00239">
    <property type="entry name" value="RECEPTOR_TYR_KIN_II"/>
    <property type="match status" value="1"/>
</dbReference>
<organism>
    <name type="scientific">Homo sapiens</name>
    <name type="common">Human</name>
    <dbReference type="NCBI Taxonomy" id="9606"/>
    <lineage>
        <taxon>Eukaryota</taxon>
        <taxon>Metazoa</taxon>
        <taxon>Chordata</taxon>
        <taxon>Craniata</taxon>
        <taxon>Vertebrata</taxon>
        <taxon>Euteleostomi</taxon>
        <taxon>Mammalia</taxon>
        <taxon>Eutheria</taxon>
        <taxon>Euarchontoglires</taxon>
        <taxon>Primates</taxon>
        <taxon>Haplorrhini</taxon>
        <taxon>Catarrhini</taxon>
        <taxon>Hominidae</taxon>
        <taxon>Homo</taxon>
    </lineage>
</organism>
<feature type="signal peptide">
    <location>
        <begin position="1"/>
        <end position="31"/>
    </location>
</feature>
<feature type="chain" id="PRO_0000016731" description="NT-3 growth factor receptor">
    <location>
        <begin position="32"/>
        <end position="839"/>
    </location>
</feature>
<feature type="topological domain" description="Extracellular" evidence="6">
    <location>
        <begin position="32"/>
        <end position="429"/>
    </location>
</feature>
<feature type="transmembrane region" description="Helical" evidence="6">
    <location>
        <begin position="430"/>
        <end position="453"/>
    </location>
</feature>
<feature type="topological domain" description="Cytoplasmic" evidence="6">
    <location>
        <begin position="454"/>
        <end position="839"/>
    </location>
</feature>
<feature type="repeat" description="LRR 1">
    <location>
        <begin position="104"/>
        <end position="125"/>
    </location>
</feature>
<feature type="repeat" description="LRR 2">
    <location>
        <begin position="128"/>
        <end position="149"/>
    </location>
</feature>
<feature type="domain" description="LRRCT">
    <location>
        <begin position="160"/>
        <end position="209"/>
    </location>
</feature>
<feature type="domain" description="Ig-like C2-type 1">
    <location>
        <begin position="210"/>
        <end position="300"/>
    </location>
</feature>
<feature type="domain" description="Ig-like C2-type 2">
    <location>
        <begin position="309"/>
        <end position="382"/>
    </location>
</feature>
<feature type="domain" description="Protein kinase" evidence="8">
    <location>
        <begin position="538"/>
        <end position="839"/>
    </location>
</feature>
<feature type="active site" description="Proton acceptor" evidence="8 9">
    <location>
        <position position="679"/>
    </location>
</feature>
<feature type="binding site" evidence="8">
    <location>
        <begin position="544"/>
        <end position="552"/>
    </location>
    <ligand>
        <name>ATP</name>
        <dbReference type="ChEBI" id="CHEBI:30616"/>
    </ligand>
</feature>
<feature type="binding site" evidence="8">
    <location>
        <position position="572"/>
    </location>
    <ligand>
        <name>ATP</name>
        <dbReference type="ChEBI" id="CHEBI:30616"/>
    </ligand>
</feature>
<feature type="site" description="Interaction with SHC1" evidence="1">
    <location>
        <position position="516"/>
    </location>
</feature>
<feature type="site" description="Interaction with PLC-gamma-1" evidence="1">
    <location>
        <position position="834"/>
    </location>
</feature>
<feature type="modified residue" description="Phosphoserine" evidence="4">
    <location>
        <position position="493"/>
    </location>
</feature>
<feature type="modified residue" description="Phosphotyrosine; by autocatalysis" evidence="13">
    <location>
        <position position="516"/>
    </location>
</feature>
<feature type="modified residue" description="Phosphotyrosine; by autocatalysis" evidence="1">
    <location>
        <position position="705"/>
    </location>
</feature>
<feature type="modified residue" description="Phosphotyrosine; by autocatalysis" evidence="1">
    <location>
        <position position="709"/>
    </location>
</feature>
<feature type="modified residue" description="Phosphotyrosine; by autocatalysis" evidence="1">
    <location>
        <position position="710"/>
    </location>
</feature>
<feature type="glycosylation site" description="N-linked (GlcNAc...) asparagine" evidence="6">
    <location>
        <position position="72"/>
    </location>
</feature>
<feature type="glycosylation site" description="N-linked (GlcNAc...) asparagine" evidence="6">
    <location>
        <position position="79"/>
    </location>
</feature>
<feature type="glycosylation site" description="N-linked (GlcNAc...) asparagine" evidence="6">
    <location>
        <position position="133"/>
    </location>
</feature>
<feature type="glycosylation site" description="N-linked (GlcNAc...) asparagine" evidence="6">
    <location>
        <position position="163"/>
    </location>
</feature>
<feature type="glycosylation site" description="N-linked (GlcNAc...) asparagine" evidence="6">
    <location>
        <position position="203"/>
    </location>
</feature>
<feature type="glycosylation site" description="N-linked (GlcNAc...) asparagine" evidence="6">
    <location>
        <position position="218"/>
    </location>
</feature>
<feature type="glycosylation site" description="N-linked (GlcNAc...) asparagine" evidence="6">
    <location>
        <position position="232"/>
    </location>
</feature>
<feature type="glycosylation site" description="N-linked (GlcNAc...) asparagine" evidence="6">
    <location>
        <position position="259"/>
    </location>
</feature>
<feature type="glycosylation site" description="N-linked (GlcNAc...) asparagine" evidence="6">
    <location>
        <position position="267"/>
    </location>
</feature>
<feature type="glycosylation site" description="N-linked (GlcNAc...) asparagine" evidence="6">
    <location>
        <position position="272"/>
    </location>
</feature>
<feature type="glycosylation site" description="N-linked (GlcNAc...) asparagine" evidence="6">
    <location>
        <position position="294"/>
    </location>
</feature>
<feature type="glycosylation site" description="N-linked (GlcNAc...) asparagine" evidence="6">
    <location>
        <position position="375"/>
    </location>
</feature>
<feature type="glycosylation site" description="N-linked (GlcNAc...) asparagine" evidence="6">
    <location>
        <position position="388"/>
    </location>
</feature>
<feature type="disulfide bond" evidence="5">
    <location>
        <begin position="32"/>
        <end position="38"/>
    </location>
</feature>
<feature type="disulfide bond" evidence="5">
    <location>
        <begin position="36"/>
        <end position="45"/>
    </location>
</feature>
<feature type="disulfide bond" evidence="5">
    <location>
        <begin position="164"/>
        <end position="189"/>
    </location>
</feature>
<feature type="disulfide bond" evidence="5">
    <location>
        <begin position="166"/>
        <end position="207"/>
    </location>
</feature>
<feature type="disulfide bond" evidence="5">
    <location>
        <begin position="231"/>
        <end position="284"/>
    </location>
</feature>
<feature type="disulfide bond" evidence="7 10 19">
    <location>
        <begin position="320"/>
        <end position="362"/>
    </location>
</feature>
<feature type="splice variant" id="VSP_002924" description="In isoform 4 and isoform 5." evidence="15">
    <original>ESTDNFILF</original>
    <variation>V</variation>
    <location>
        <begin position="402"/>
        <end position="410"/>
    </location>
</feature>
<feature type="splice variant" id="VSP_002925" description="In isoform 2." evidence="17">
    <original>YVQHIKRRDIVLKRELGEGAFGKVFLAECYNLSPTKDKMLVAVKALKDPTLAARKDFQREAELLTNLQHEHIVKFYGVCGDGDP</original>
    <variation>WVFSNIDNHGILNLKDNRDHLVPSTHYIYEEPEVQSGEVSYPRSHGFREIMLNPISLPGHSKPLNHGIYVEDVNVYFSKGRHGF</variation>
    <location>
        <begin position="529"/>
        <end position="612"/>
    </location>
</feature>
<feature type="splice variant" id="VSP_002926" description="In isoform 2." evidence="17">
    <location>
        <begin position="613"/>
        <end position="839"/>
    </location>
</feature>
<feature type="splice variant" id="VSP_002927" description="In isoform 3 and isoform 5." evidence="15 16 17">
    <location>
        <begin position="712"/>
        <end position="725"/>
    </location>
</feature>
<feature type="sequence variant" id="VAR_074601" description="In dbSNP:rs200822610." evidence="13">
    <original>V</original>
    <variation>F</variation>
    <location>
        <position position="21"/>
    </location>
</feature>
<feature type="sequence variant" id="VAR_074602" description="Found in patients with CHD; uncertain significance; dbSNP:rs200923715." evidence="13">
    <original>I</original>
    <variation>V</variation>
    <location>
        <position position="71"/>
    </location>
</feature>
<feature type="sequence variant" id="VAR_074603" description="Found in patients with congenital heart defects; uncertain significance; significantly reduced autophosphorylation; decreased NTRK3 signaling and decreased apoptosis in absence of NTF3; dbSNP:rs147992979." evidence="13">
    <original>T</original>
    <variation>M</variation>
    <location>
        <position position="93"/>
    </location>
</feature>
<feature type="sequence variant" id="VAR_041471" description="In a gastric adenocarcinoma sample; somatic mutation; dbSNP:rs368222977." evidence="11">
    <original>T</original>
    <variation>R</variation>
    <location>
        <position position="149"/>
    </location>
</feature>
<feature type="sequence variant" id="VAR_074604" description="Found in patients with congenital heart defects; uncertain significance; no change in autophosphorylation; no effect on NTRK3 signaling; dbSNP:rs547862658." evidence="13">
    <original>N</original>
    <variation>I</variation>
    <location>
        <position position="163"/>
    </location>
</feature>
<feature type="sequence variant" id="VAR_041472" description="In dbSNP:rs56386352." evidence="11">
    <original>R</original>
    <variation>C</variation>
    <location>
        <position position="306"/>
    </location>
</feature>
<feature type="sequence variant" id="VAR_041473" description="In a lung adenocarcinoma sample; somatic mutation; dbSNP:rs1388363572." evidence="11">
    <original>V</original>
    <variation>L</variation>
    <location>
        <position position="307"/>
    </location>
</feature>
<feature type="sequence variant" id="VAR_041474" description="In a lung adenocarcinoma sample; somatic mutation." evidence="11">
    <original>L</original>
    <variation>Q</variation>
    <location>
        <position position="336"/>
    </location>
</feature>
<feature type="sequence variant" id="VAR_074605" description="Found in patients with congenital heart defects; uncertain significance; no change in autophosphorylation; changed NTRK3 signaling with decreased apoptosis in absence of NTF3; dbSNP:rs869112057." evidence="13">
    <original>I</original>
    <variation>F</variation>
    <location>
        <position position="533"/>
    </location>
</feature>
<feature type="sequence variant" id="VAR_046521" description="In a lung carcinoma sample; somatic mutation." evidence="12">
    <original>A</original>
    <variation>S</variation>
    <location>
        <position position="664"/>
    </location>
</feature>
<feature type="sequence variant" id="VAR_041475" description="In a lung adenocarcinoma sample; somatic mutation." evidence="11 12">
    <original>H</original>
    <variation>Y</variation>
    <location>
        <position position="677"/>
    </location>
</feature>
<feature type="sequence variant" id="VAR_041476" description="In dbSNP:rs55890138." evidence="11">
    <original>R</original>
    <variation>Q</variation>
    <location>
        <position position="678"/>
    </location>
</feature>
<feature type="sequence variant" id="VAR_046770" description="In a lung large cell carcinoma sample; somatic mutation; requires 2 nucleotide substitutions.">
    <original>R</original>
    <variation>F</variation>
    <location>
        <position position="735"/>
    </location>
</feature>
<feature type="sequence variant" id="VAR_046522" description="In a lung carcinoma sample; somatic mutation." evidence="12">
    <original>W</original>
    <variation>C</variation>
    <location>
        <position position="736"/>
    </location>
</feature>
<feature type="sequence variant" id="VAR_046523" description="In a lung carcinoma sample; somatic mutation." evidence="12">
    <original>R</original>
    <variation>P</variation>
    <location>
        <position position="745"/>
    </location>
</feature>
<feature type="sequence variant" id="VAR_046524" description="In a lung carcinoma sample; somatic mutation." evidence="12">
    <original>Y</original>
    <variation>F</variation>
    <location>
        <position position="766"/>
    </location>
</feature>
<feature type="sequence variant" id="VAR_046771" description="In dbSNP:rs55770052." evidence="11">
    <original>K</original>
    <variation>R</variation>
    <location>
        <position position="768"/>
    </location>
</feature>
<feature type="sequence variant" id="VAR_046772" description="In dbSNP:rs56393451." evidence="11">
    <original>E</original>
    <variation>K</variation>
    <location>
        <position position="781"/>
    </location>
</feature>
<feature type="sequence variant" id="VAR_074606" description="Found in patients with congenital heart defects; uncertain significance; no change in autophosphorylation; changed NTRK3 signaling with decreased apoptosis in absence of NTF3; dbSNP:rs869209165." evidence="13">
    <original>I</original>
    <variation>M</variation>
    <location>
        <position position="817"/>
    </location>
</feature>
<feature type="mutagenesis site" description="Loss of autophosphorylation and loss of NTRK3 signaling." evidence="13">
    <original>K</original>
    <variation>N</variation>
    <location>
        <position position="572"/>
    </location>
</feature>
<feature type="sequence conflict" description="In Ref. 4; BAH12511." evidence="18" ref="4">
    <original>S</original>
    <variation>G</variation>
    <location>
        <position position="65"/>
    </location>
</feature>
<feature type="sequence conflict" description="In Ref. 2; AAB33111/AAB33112." evidence="18" ref="2">
    <original>S</original>
    <variation>N</variation>
    <location>
        <position position="70"/>
    </location>
</feature>
<feature type="sequence conflict" description="In Ref. 1; AAA75374." evidence="18" ref="1">
    <original>D</original>
    <variation>N</variation>
    <location>
        <position position="635"/>
    </location>
</feature>
<feature type="strand" evidence="20">
    <location>
        <begin position="318"/>
        <end position="326"/>
    </location>
</feature>
<feature type="strand" evidence="20">
    <location>
        <begin position="332"/>
        <end position="337"/>
    </location>
</feature>
<feature type="strand" evidence="20">
    <location>
        <begin position="345"/>
        <end position="354"/>
    </location>
</feature>
<feature type="strand" evidence="20">
    <location>
        <begin position="356"/>
        <end position="367"/>
    </location>
</feature>
<feature type="helix" evidence="20">
    <location>
        <begin position="370"/>
        <end position="372"/>
    </location>
</feature>
<feature type="strand" evidence="20">
    <location>
        <begin position="374"/>
        <end position="382"/>
    </location>
</feature>
<feature type="strand" evidence="20">
    <location>
        <begin position="385"/>
        <end position="393"/>
    </location>
</feature>
<feature type="helix" evidence="22">
    <location>
        <begin position="535"/>
        <end position="537"/>
    </location>
</feature>
<feature type="strand" evidence="22">
    <location>
        <begin position="538"/>
        <end position="547"/>
    </location>
</feature>
<feature type="strand" evidence="22">
    <location>
        <begin position="550"/>
        <end position="559"/>
    </location>
</feature>
<feature type="strand" evidence="22">
    <location>
        <begin position="567"/>
        <end position="576"/>
    </location>
</feature>
<feature type="helix" evidence="22">
    <location>
        <begin position="579"/>
        <end position="594"/>
    </location>
</feature>
<feature type="strand" evidence="22">
    <location>
        <begin position="603"/>
        <end position="606"/>
    </location>
</feature>
<feature type="strand" evidence="22">
    <location>
        <begin position="609"/>
        <end position="618"/>
    </location>
</feature>
<feature type="helix" evidence="22">
    <location>
        <begin position="625"/>
        <end position="631"/>
    </location>
</feature>
<feature type="helix" evidence="22">
    <location>
        <begin position="653"/>
        <end position="672"/>
    </location>
</feature>
<feature type="helix" evidence="22">
    <location>
        <begin position="682"/>
        <end position="684"/>
    </location>
</feature>
<feature type="strand" evidence="22">
    <location>
        <begin position="685"/>
        <end position="687"/>
    </location>
</feature>
<feature type="helix" evidence="22">
    <location>
        <begin position="689"/>
        <end position="691"/>
    </location>
</feature>
<feature type="strand" evidence="22">
    <location>
        <begin position="693"/>
        <end position="695"/>
    </location>
</feature>
<feature type="strand" evidence="22">
    <location>
        <begin position="700"/>
        <end position="704"/>
    </location>
</feature>
<feature type="helix" evidence="21">
    <location>
        <begin position="706"/>
        <end position="708"/>
    </location>
</feature>
<feature type="helix" evidence="22">
    <location>
        <begin position="734"/>
        <end position="736"/>
    </location>
</feature>
<feature type="helix" evidence="22">
    <location>
        <begin position="739"/>
        <end position="744"/>
    </location>
</feature>
<feature type="helix" evidence="22">
    <location>
        <begin position="749"/>
        <end position="764"/>
    </location>
</feature>
<feature type="turn" evidence="22">
    <location>
        <begin position="765"/>
        <end position="767"/>
    </location>
</feature>
<feature type="turn" evidence="22">
    <location>
        <begin position="770"/>
        <end position="773"/>
    </location>
</feature>
<feature type="helix" evidence="22">
    <location>
        <begin position="776"/>
        <end position="784"/>
    </location>
</feature>
<feature type="helix" evidence="22">
    <location>
        <begin position="797"/>
        <end position="806"/>
    </location>
</feature>
<feature type="helix" evidence="22">
    <location>
        <begin position="811"/>
        <end position="813"/>
    </location>
</feature>
<feature type="helix" evidence="22">
    <location>
        <begin position="817"/>
        <end position="827"/>
    </location>
</feature>
<protein>
    <recommendedName>
        <fullName>NT-3 growth factor receptor</fullName>
        <ecNumber>2.7.10.1</ecNumber>
    </recommendedName>
    <alternativeName>
        <fullName>GP145-TrkC</fullName>
        <shortName>Trk-C</shortName>
    </alternativeName>
    <alternativeName>
        <fullName>Neurotrophic tyrosine kinase receptor type 3</fullName>
    </alternativeName>
    <alternativeName>
        <fullName>TrkC tyrosine kinase</fullName>
    </alternativeName>
</protein>
<comment type="function">
    <text evidence="13">Receptor tyrosine kinase involved in nervous system and probably heart development. Upon binding of its ligand NTF3/neurotrophin-3, NTRK3 autophosphorylates and activates different signaling pathways, including the phosphatidylinositol 3-kinase/AKT and the MAPK pathways, that control cell survival and differentiation.</text>
</comment>
<comment type="catalytic activity">
    <reaction evidence="9">
        <text>L-tyrosyl-[protein] + ATP = O-phospho-L-tyrosyl-[protein] + ADP + H(+)</text>
        <dbReference type="Rhea" id="RHEA:10596"/>
        <dbReference type="Rhea" id="RHEA-COMP:10136"/>
        <dbReference type="Rhea" id="RHEA-COMP:20101"/>
        <dbReference type="ChEBI" id="CHEBI:15378"/>
        <dbReference type="ChEBI" id="CHEBI:30616"/>
        <dbReference type="ChEBI" id="CHEBI:46858"/>
        <dbReference type="ChEBI" id="CHEBI:61978"/>
        <dbReference type="ChEBI" id="CHEBI:456216"/>
        <dbReference type="EC" id="2.7.10.1"/>
    </reaction>
</comment>
<comment type="subunit">
    <text evidence="2 3 14">Exists in a dynamic equilibrium between monomeric (low affinity) and dimeric (high affinity) structures (By similarity). Binds SH2B2. Interacts with SQSTM1 and KIDINS220 (By similarity). Interacts with PTPRS (PubMed:25385546). Interacts with MAPK8IP3/JIP3 (By similarity).</text>
</comment>
<comment type="interaction">
    <interactant intactId="EBI-3936704">
        <id>Q16288</id>
    </interactant>
    <interactant intactId="EBI-1381484">
        <id>Q16832</id>
        <label>DDR2</label>
    </interactant>
    <organismsDiffer>false</organismsDiffer>
    <experiments>2</experiments>
</comment>
<comment type="interaction">
    <interactant intactId="EBI-3936704">
        <id>Q16288</id>
    </interactant>
    <interactant intactId="EBI-2880244">
        <id>Q6PKX4</id>
        <label>DOK6</label>
    </interactant>
    <organismsDiffer>false</organismsDiffer>
    <experiments>3</experiments>
</comment>
<comment type="interaction">
    <interactant intactId="EBI-3936704">
        <id>Q16288</id>
    </interactant>
    <interactant intactId="EBI-1383428">
        <id>Q15375</id>
        <label>EPHA7</label>
    </interactant>
    <organismsDiffer>false</organismsDiffer>
    <experiments>2</experiments>
</comment>
<comment type="interaction">
    <interactant intactId="EBI-3936704">
        <id>Q16288</id>
    </interactant>
    <interactant intactId="EBI-1039152">
        <id>P08581</id>
        <label>MET</label>
    </interactant>
    <organismsDiffer>false</organismsDiffer>
    <experiments>2</experiments>
</comment>
<comment type="interaction">
    <interactant intactId="EBI-3936704">
        <id>Q16288</id>
    </interactant>
    <interactant intactId="EBI-1028226">
        <id>P04629</id>
        <label>NTRK1</label>
    </interactant>
    <organismsDiffer>false</organismsDiffer>
    <experiments>2</experiments>
</comment>
<comment type="interaction">
    <interactant intactId="EBI-3936704">
        <id>Q16288</id>
    </interactant>
    <interactant intactId="EBI-3904881">
        <id>Q16620</id>
        <label>NTRK2</label>
    </interactant>
    <organismsDiffer>false</organismsDiffer>
    <experiments>3</experiments>
</comment>
<comment type="interaction">
    <interactant intactId="EBI-3936704">
        <id>Q16288</id>
    </interactant>
    <interactant intactId="EBI-968788">
        <id>P18031</id>
        <label>PTPN1</label>
    </interactant>
    <organismsDiffer>false</organismsDiffer>
    <experiments>2</experiments>
</comment>
<comment type="interaction">
    <interactant intactId="EBI-3936704">
        <id>Q16288</id>
    </interactant>
    <interactant intactId="EBI-358919">
        <id>P61619</id>
        <label>SEC61A1</label>
    </interactant>
    <organismsDiffer>false</organismsDiffer>
    <experiments>2</experiments>
</comment>
<comment type="interaction">
    <interactant intactId="EBI-3936704">
        <id>Q16288</id>
    </interactant>
    <interactant intactId="EBI-358766">
        <id>Q9UBV2</id>
        <label>SEL1L</label>
    </interactant>
    <organismsDiffer>false</organismsDiffer>
    <experiments>2</experiments>
</comment>
<comment type="interaction">
    <interactant intactId="EBI-3936704">
        <id>Q16288</id>
    </interactant>
    <interactant intactId="EBI-476295">
        <id>P31947</id>
        <label>SFN</label>
    </interactant>
    <organismsDiffer>false</organismsDiffer>
    <experiments>2</experiments>
</comment>
<comment type="interaction">
    <interactant intactId="EBI-3936704">
        <id>Q16288</id>
    </interactant>
    <interactant intactId="EBI-1057058">
        <id>Q99523</id>
        <label>SORT1</label>
    </interactant>
    <organismsDiffer>false</organismsDiffer>
    <experiments>2</experiments>
</comment>
<comment type="interaction">
    <interactant intactId="EBI-3936704">
        <id>Q16288</id>
    </interactant>
    <interactant intactId="EBI-356498">
        <id>P62258</id>
        <label>YWHAE</label>
    </interactant>
    <organismsDiffer>false</organismsDiffer>
    <experiments>2</experiments>
</comment>
<comment type="subcellular location">
    <subcellularLocation>
        <location>Membrane</location>
        <topology>Single-pass type I membrane protein</topology>
    </subcellularLocation>
</comment>
<comment type="alternative products">
    <event type="alternative splicing"/>
    <isoform>
        <id>Q16288-1</id>
        <name>1</name>
        <name>A</name>
        <sequence type="displayed"/>
    </isoform>
    <isoform>
        <id>Q16288-2</id>
        <name>2</name>
        <name>B</name>
        <sequence type="described" ref="VSP_002925 VSP_002926"/>
    </isoform>
    <isoform>
        <id>Q16288-3</id>
        <name>3</name>
        <name>C</name>
        <sequence type="described" ref="VSP_002927"/>
    </isoform>
    <isoform>
        <id>Q16288-4</id>
        <name>4</name>
        <name>D</name>
        <sequence type="described" ref="VSP_002924"/>
    </isoform>
    <isoform>
        <id>Q16288-5</id>
        <name>5</name>
        <name>E</name>
        <sequence type="described" ref="VSP_002924 VSP_002927"/>
    </isoform>
    <text>Additional isoforms seem to exist.</text>
</comment>
<comment type="tissue specificity">
    <text>Widely expressed but mainly in nervous tissue. Isoform 2 is expressed at higher levels in adult brain than in fetal brain.</text>
</comment>
<comment type="PTM">
    <text>Ligand-mediated auto-phosphorylation.</text>
</comment>
<comment type="disease">
    <text evidence="13">Defects in NTRK3 are associated with susceptibility to congenital heart defects (CHD). A disease characterized by congenital developmental abnormalities involving structures of the heart. CHD are the most common major birth defects and the leading cause of death from congenital malformations.</text>
</comment>
<comment type="similarity">
    <text evidence="8">Belongs to the protein kinase superfamily. Tyr protein kinase family. Insulin receptor subfamily.</text>
</comment>
<comment type="online information" name="Atlas of Genetics and Cytogenetics in Oncology and Haematology">
    <link uri="https://atlasgeneticsoncology.org/gene/433/NTRK3"/>
</comment>
<proteinExistence type="evidence at protein level"/>